<comment type="function">
    <text evidence="1 3 4 7 8 9 10">High-affinity sodium/citrate cotransporter that mediates the entry of citrate into cells, which is a critical participant of biochemical pathways (PubMed:12445824, PubMed:12826022, PubMed:26324167, PubMed:26384929, PubMed:30054523, PubMed:33597751). May function in various metabolic processes in which citrate has a critical role such as energy production (Krebs cycle), fatty acid synthesis, cholesterol synthesis, glycolysis, and gluconeogenesis (PubMed:12826022). Transports citrate into the cell in a Na(+)-dependent manner, recognizing the trivalent form of citrate (physiological pH) rather than the divalent form (PubMed:12445824, PubMed:12826022, PubMed:26324167, PubMed:26384929, PubMed:30054523, PubMed:33597751). Can recognize succinate as a substrate, but its affinity for succinate is several fold lower than for citrate (PubMed:26324167). The stoichiometry is probably 4 Na(+) for each carboxylate, irrespective of whether the translocated substrate is divalent or trivalent, rendering the process electrogenic (PubMed:12445824, PubMed:12826022). Involved in the regulation of citrate levels in the brain (By similarity).</text>
</comment>
<comment type="catalytic activity">
    <reaction evidence="3 4 7 8 9 10">
        <text>citrate(out) + 4 Na(+)(out) = citrate(in) + 4 Na(+)(in)</text>
        <dbReference type="Rhea" id="RHEA:65664"/>
        <dbReference type="ChEBI" id="CHEBI:16947"/>
        <dbReference type="ChEBI" id="CHEBI:29101"/>
    </reaction>
</comment>
<comment type="activity regulation">
    <text evidence="4 10">Inhibited by (R)-2-(4-(tert-butyl)phenethyl)-2-hydroxysuccinic acid (also known as PF-06649298) (PubMed:33597751). Stimulated by Li(+) in the presence of Na(+), moreover changes stoichiometry from 4:1 to 2:1 Na(+):citrate (PubMed:12826022).</text>
</comment>
<comment type="biophysicochemical properties">
    <kinetics>
        <KM evidence="9">1439 uM for citrate</KM>
        <Vmax evidence="9">13910.0 pmol/min/mg enzyme toward citrate</Vmax>
    </kinetics>
</comment>
<comment type="subunit">
    <text evidence="10">Homodimer.</text>
</comment>
<comment type="interaction">
    <interactant intactId="EBI-12002412">
        <id>Q86YT5</id>
    </interactant>
    <interactant intactId="EBI-10173507">
        <id>Q6UY14-3</id>
        <label>ADAMTSL4</label>
    </interactant>
    <organismsDiffer>false</organismsDiffer>
    <experiments>3</experiments>
</comment>
<comment type="interaction">
    <interactant intactId="EBI-12002412">
        <id>Q86YT5</id>
    </interactant>
    <interactant intactId="EBI-7797864">
        <id>P11912</id>
        <label>CD79A</label>
    </interactant>
    <organismsDiffer>false</organismsDiffer>
    <experiments>3</experiments>
</comment>
<comment type="interaction">
    <interactant intactId="EBI-12002412">
        <id>Q86YT5</id>
    </interactant>
    <interactant intactId="EBI-3867333">
        <id>A8MQ03</id>
        <label>CYSRT1</label>
    </interactant>
    <organismsDiffer>false</organismsDiffer>
    <experiments>3</experiments>
</comment>
<comment type="interaction">
    <interactant intactId="EBI-12002412">
        <id>Q86YT5</id>
    </interactant>
    <interactant intactId="EBI-354943">
        <id>Q05639</id>
        <label>EEF1A2</label>
    </interactant>
    <organismsDiffer>false</organismsDiffer>
    <experiments>2</experiments>
</comment>
<comment type="interaction">
    <interactant intactId="EBI-12002412">
        <id>Q86YT5</id>
    </interactant>
    <interactant intactId="EBI-17458373">
        <id>P48165</id>
        <label>GJA8</label>
    </interactant>
    <organismsDiffer>false</organismsDiffer>
    <experiments>3</experiments>
</comment>
<comment type="interaction">
    <interactant intactId="EBI-12002412">
        <id>Q86YT5</id>
    </interactant>
    <interactant intactId="EBI-712073">
        <id>Q8NBJ4</id>
        <label>GOLM1</label>
    </interactant>
    <organismsDiffer>false</organismsDiffer>
    <experiments>3</experiments>
</comment>
<comment type="interaction">
    <interactant intactId="EBI-12002412">
        <id>Q86YT5</id>
    </interactant>
    <interactant intactId="EBI-10693436">
        <id>Q9BS75</id>
        <label>KLHL20</label>
    </interactant>
    <organismsDiffer>false</organismsDiffer>
    <experiments>3</experiments>
</comment>
<comment type="interaction">
    <interactant intactId="EBI-12002412">
        <id>Q86YT5</id>
    </interactant>
    <interactant intactId="EBI-11749135">
        <id>Q8IUG1</id>
        <label>KRTAP1-3</label>
    </interactant>
    <organismsDiffer>false</organismsDiffer>
    <experiments>3</experiments>
</comment>
<comment type="interaction">
    <interactant intactId="EBI-12002412">
        <id>Q86YT5</id>
    </interactant>
    <interactant intactId="EBI-10171774">
        <id>P60410</id>
        <label>KRTAP10-8</label>
    </interactant>
    <organismsDiffer>false</organismsDiffer>
    <experiments>3</experiments>
</comment>
<comment type="interaction">
    <interactant intactId="EBI-12002412">
        <id>Q86YT5</id>
    </interactant>
    <interactant intactId="EBI-1052037">
        <id>Q8IUC1</id>
        <label>KRTAP11-1</label>
    </interactant>
    <organismsDiffer>false</organismsDiffer>
    <experiments>3</experiments>
</comment>
<comment type="interaction">
    <interactant intactId="EBI-12002412">
        <id>Q86YT5</id>
    </interactant>
    <interactant intactId="EBI-10176379">
        <id>P59991</id>
        <label>KRTAP12-2</label>
    </interactant>
    <organismsDiffer>false</organismsDiffer>
    <experiments>3</experiments>
</comment>
<comment type="interaction">
    <interactant intactId="EBI-12002412">
        <id>Q86YT5</id>
    </interactant>
    <interactant intactId="EBI-11953334">
        <id>P60328</id>
        <label>KRTAP12-3</label>
    </interactant>
    <organismsDiffer>false</organismsDiffer>
    <experiments>3</experiments>
</comment>
<comment type="interaction">
    <interactant intactId="EBI-12002412">
        <id>Q86YT5</id>
    </interactant>
    <interactant intactId="EBI-751260">
        <id>Q9BYR7</id>
        <label>KRTAP3-2</label>
    </interactant>
    <organismsDiffer>false</organismsDiffer>
    <experiments>3</experiments>
</comment>
<comment type="interaction">
    <interactant intactId="EBI-12002412">
        <id>Q86YT5</id>
    </interactant>
    <interactant intactId="EBI-11958178">
        <id>Q701N4</id>
        <label>KRTAP5-2</label>
    </interactant>
    <organismsDiffer>false</organismsDiffer>
    <experiments>3</experiments>
</comment>
<comment type="interaction">
    <interactant intactId="EBI-12002412">
        <id>Q86YT5</id>
    </interactant>
    <interactant intactId="EBI-3958099">
        <id>P26371</id>
        <label>KRTAP5-9</label>
    </interactant>
    <organismsDiffer>false</organismsDiffer>
    <experiments>3</experiments>
</comment>
<comment type="interaction">
    <interactant intactId="EBI-12002412">
        <id>Q86YT5</id>
    </interactant>
    <interactant intactId="EBI-1044640">
        <id>Q9BYQ4</id>
        <label>KRTAP9-2</label>
    </interactant>
    <organismsDiffer>false</organismsDiffer>
    <experiments>3</experiments>
</comment>
<comment type="interaction">
    <interactant intactId="EBI-12002412">
        <id>Q86YT5</id>
    </interactant>
    <interactant intactId="EBI-1043191">
        <id>Q9BYQ3</id>
        <label>KRTAP9-3</label>
    </interactant>
    <organismsDiffer>false</organismsDiffer>
    <experiments>3</experiments>
</comment>
<comment type="interaction">
    <interactant intactId="EBI-12002412">
        <id>Q86YT5</id>
    </interactant>
    <interactant intactId="EBI-11958364">
        <id>Q9BYQ0</id>
        <label>KRTAP9-8</label>
    </interactant>
    <organismsDiffer>false</organismsDiffer>
    <experiments>3</experiments>
</comment>
<comment type="interaction">
    <interactant intactId="EBI-12002412">
        <id>Q86YT5</id>
    </interactant>
    <interactant intactId="EBI-724076">
        <id>Q99750</id>
        <label>MDFI</label>
    </interactant>
    <organismsDiffer>false</organismsDiffer>
    <experiments>3</experiments>
</comment>
<comment type="interaction">
    <interactant intactId="EBI-26979686">
        <id>Q86YT5-1</id>
    </interactant>
    <interactant intactId="EBI-26979686">
        <id>Q86YT5-1</id>
        <label>SLC13A5</label>
    </interactant>
    <organismsDiffer>false</organismsDiffer>
    <experiments>2</experiments>
</comment>
<comment type="subcellular location">
    <subcellularLocation>
        <location evidence="8 9">Cell membrane</location>
        <topology evidence="2">Multi-pass membrane protein</topology>
    </subcellularLocation>
</comment>
<comment type="alternative products">
    <event type="alternative splicing"/>
    <isoform>
        <id>Q86YT5-1</id>
        <name>1</name>
        <sequence type="displayed"/>
    </isoform>
    <isoform>
        <id>Q86YT5-2</id>
        <name>2</name>
        <sequence type="described" ref="VSP_043098"/>
    </isoform>
    <isoform>
        <id>Q86YT5-3</id>
        <name>3</name>
        <sequence type="described" ref="VSP_054910"/>
    </isoform>
    <isoform>
        <id>Q86YT5-4</id>
        <name>4</name>
        <sequence type="described" ref="VSP_055652"/>
    </isoform>
</comment>
<comment type="tissue specificity">
    <text evidence="3">Expressed most predominantly in the liver, with moderate expression detectable in the brain and testis.</text>
</comment>
<comment type="disease" evidence="6 8 9">
    <disease id="DI-04176">
        <name>Developmental and epileptic encephalopathy 25, with amelogenesis imperfecta</name>
        <acronym>DEE25</acronym>
        <description>An autosomal recessive disease characterized by subclinical seizures appearing in the first days of life, evolving to severe epileptic disease. Affected individuals have profound or severe delayed development with lack of speech, and most patients do not acquire the ability to sit. Additional variable features include axial hypotonia, peripheral hypertonia, and abnormal involuntary movements such as dystonia and choreoathetosis. Dental abnormalities, including delayed eruption, hypodontia, tooth hypoplasia, yellow discoloration, thin enamel, and enamel chipping are observed in most patients.</description>
        <dbReference type="MIM" id="615905"/>
    </disease>
    <text>The disease is caused by variants affecting the gene represented in this entry.</text>
</comment>
<comment type="similarity">
    <text evidence="14">Belongs to the SLC13A/DASS transporter (TC 2.A.47) family. NADC subfamily.</text>
</comment>
<evidence type="ECO:0000250" key="1">
    <source>
        <dbReference type="UniProtKB" id="Q67BT3"/>
    </source>
</evidence>
<evidence type="ECO:0000255" key="2"/>
<evidence type="ECO:0000269" key="3">
    <source>
    </source>
</evidence>
<evidence type="ECO:0000269" key="4">
    <source>
    </source>
</evidence>
<evidence type="ECO:0000269" key="5">
    <source>
    </source>
</evidence>
<evidence type="ECO:0000269" key="6">
    <source>
    </source>
</evidence>
<evidence type="ECO:0000269" key="7">
    <source>
    </source>
</evidence>
<evidence type="ECO:0000269" key="8">
    <source>
    </source>
</evidence>
<evidence type="ECO:0000269" key="9">
    <source>
    </source>
</evidence>
<evidence type="ECO:0000269" key="10">
    <source>
    </source>
</evidence>
<evidence type="ECO:0000303" key="11">
    <source>
    </source>
</evidence>
<evidence type="ECO:0000303" key="12">
    <source>
    </source>
</evidence>
<evidence type="ECO:0000303" key="13">
    <source>
    </source>
</evidence>
<evidence type="ECO:0000305" key="14"/>
<evidence type="ECO:0007829" key="15">
    <source>
        <dbReference type="PDB" id="7JSJ"/>
    </source>
</evidence>
<evidence type="ECO:0007829" key="16">
    <source>
        <dbReference type="PDB" id="7JSK"/>
    </source>
</evidence>
<keyword id="KW-0002">3D-structure</keyword>
<keyword id="KW-0025">Alternative splicing</keyword>
<keyword id="KW-0986">Amelogenesis imperfecta</keyword>
<keyword id="KW-1003">Cell membrane</keyword>
<keyword id="KW-0225">Disease variant</keyword>
<keyword id="KW-0887">Epilepsy</keyword>
<keyword id="KW-0325">Glycoprotein</keyword>
<keyword id="KW-0406">Ion transport</keyword>
<keyword id="KW-0472">Membrane</keyword>
<keyword id="KW-1267">Proteomics identification</keyword>
<keyword id="KW-1185">Reference proteome</keyword>
<keyword id="KW-0915">Sodium</keyword>
<keyword id="KW-0739">Sodium transport</keyword>
<keyword id="KW-0769">Symport</keyword>
<keyword id="KW-0812">Transmembrane</keyword>
<keyword id="KW-1133">Transmembrane helix</keyword>
<keyword id="KW-0813">Transport</keyword>
<name>S13A5_HUMAN</name>
<feature type="chain" id="PRO_0000260101" description="Na(+)/citrate cotransporter">
    <location>
        <begin position="1"/>
        <end position="568"/>
    </location>
</feature>
<feature type="transmembrane region" description="Helical" evidence="2">
    <location>
        <begin position="13"/>
        <end position="33"/>
    </location>
</feature>
<feature type="transmembrane region" description="Helical" evidence="2">
    <location>
        <begin position="53"/>
        <end position="73"/>
    </location>
</feature>
<feature type="transmembrane region" description="Helical" evidence="2">
    <location>
        <begin position="80"/>
        <end position="100"/>
    </location>
</feature>
<feature type="transmembrane region" description="Helical" evidence="2">
    <location>
        <begin position="124"/>
        <end position="144"/>
    </location>
</feature>
<feature type="transmembrane region" description="Helical" evidence="2">
    <location>
        <begin position="215"/>
        <end position="235"/>
    </location>
</feature>
<feature type="transmembrane region" description="Helical" evidence="2">
    <location>
        <begin position="252"/>
        <end position="272"/>
    </location>
</feature>
<feature type="transmembrane region" description="Helical" evidence="2">
    <location>
        <begin position="311"/>
        <end position="331"/>
    </location>
</feature>
<feature type="transmembrane region" description="Helical" evidence="2">
    <location>
        <begin position="353"/>
        <end position="373"/>
    </location>
</feature>
<feature type="transmembrane region" description="Helical" evidence="2">
    <location>
        <begin position="406"/>
        <end position="426"/>
    </location>
</feature>
<feature type="transmembrane region" description="Helical" evidence="2">
    <location>
        <begin position="439"/>
        <end position="459"/>
    </location>
</feature>
<feature type="transmembrane region" description="Helical" evidence="2">
    <location>
        <begin position="487"/>
        <end position="507"/>
    </location>
</feature>
<feature type="transmembrane region" description="Helical" evidence="2">
    <location>
        <begin position="528"/>
        <end position="548"/>
    </location>
</feature>
<feature type="glycosylation site" description="N-linked (GlcNAc...) asparagine" evidence="5">
    <location>
        <position position="562"/>
    </location>
</feature>
<feature type="splice variant" id="VSP_055652" description="In isoform 4." evidence="12">
    <location>
        <begin position="35"/>
        <end position="77"/>
    </location>
</feature>
<feature type="splice variant" id="VSP_054910" description="In isoform 3." evidence="12">
    <location>
        <begin position="124"/>
        <end position="140"/>
    </location>
</feature>
<feature type="splice variant" id="VSP_043098" description="In isoform 2." evidence="13">
    <location>
        <begin position="479"/>
        <end position="524"/>
    </location>
</feature>
<feature type="sequence variant" id="VAR_078912" description="In DEE25; no loss of localization to plasma membrane; loss of function in citrate transport; dbSNP:rs761917087." evidence="8">
    <original>T</original>
    <variation>M</variation>
    <location>
        <position position="142"/>
    </location>
</feature>
<feature type="sequence variant" id="VAR_084747" description="Loss of localization to plasma membrane; loss of function in citrate transport; dbSNP:rs150024888." evidence="9">
    <original>G</original>
    <variation>E</variation>
    <location>
        <position position="219"/>
    </location>
</feature>
<feature type="sequence variant" id="VAR_078913" description="In DEE25; loss of function in citrate transport; loss of localization to plasma membrane; dbSNP:rs144332569." evidence="6 8 9">
    <original>G</original>
    <variation>R</variation>
    <location>
        <position position="219"/>
    </location>
</feature>
<feature type="sequence variant" id="VAR_078914" description="In DEE25; loss of function in citrate transport; no effect on localization to plasma membrane; dbSNP:rs587777577." evidence="6 8 9">
    <original>T</original>
    <variation>M</variation>
    <location>
        <position position="227"/>
    </location>
</feature>
<feature type="sequence variant" id="VAR_084748" description="No effect on localization to plasma membrane; no effect on its function in citrate transport; dbSNP:rs142262032." evidence="9">
    <original>D</original>
    <variation>N</variation>
    <location>
        <position position="243"/>
    </location>
</feature>
<feature type="sequence variant" id="VAR_078915" description="In DEE25; loss of localization to plasma membrane; loss of function in citrate transport." evidence="8">
    <location>
        <begin position="341"/>
        <end position="568"/>
    </location>
</feature>
<feature type="sequence variant" id="VAR_084749" description="Loss of localization to plasma membrane; loss of function in citrate transport; dbSNP:rs150738356." evidence="9">
    <original>L</original>
    <variation>P</variation>
    <location>
        <position position="420"/>
    </location>
</feature>
<feature type="sequence variant" id="VAR_078916" description="In DEE25; loss of localization to plasma membrane; loss of function in citrate transport; dbSNP:rs548065551." evidence="8">
    <original>S</original>
    <variation>L</variation>
    <location>
        <position position="427"/>
    </location>
</feature>
<feature type="sequence variant" id="VAR_084750" description="No effect on localization to plasma membrane; reduced function in citrate transport; increased Km and Vmax values compared with that of wild type with citrate as substrate; dbSNP:rs148049520." evidence="9">
    <original>L</original>
    <variation>R</variation>
    <location>
        <position position="485"/>
    </location>
</feature>
<feature type="sequence variant" id="VAR_078917" description="In DEE25; loss of function in citrate transport; loss of localization to plasma membrane; dbSNP:rs587777578." evidence="6 9">
    <original>L</original>
    <variation>P</variation>
    <location>
        <position position="488"/>
    </location>
</feature>
<feature type="sequence variant" id="VAR_078918" description="In DEE25; loss of function in citrate transport; no effect on localization to plasma membrane; dbSNP:rs863225448." evidence="8">
    <original>D</original>
    <variation>H</variation>
    <location>
        <position position="524"/>
    </location>
</feature>
<feature type="mutagenesis site" description="No effect on its function in citrate transport." evidence="10">
    <original>G</original>
    <variation>Q</variation>
    <location>
        <position position="409"/>
    </location>
</feature>
<feature type="mutagenesis site" description="Significant loss of function in citrate transport." evidence="10">
    <original>I</original>
    <variation>A</variation>
    <variation>F</variation>
    <location>
        <position position="410"/>
    </location>
</feature>
<feature type="mutagenesis site" description="No effect on its function in citrate transport." evidence="10">
    <original>I</original>
    <variation>V</variation>
    <location>
        <position position="410"/>
    </location>
</feature>
<feature type="sequence conflict" description="In Ref. 2; BAD18766." evidence="14" ref="2">
    <original>W</original>
    <variation>R</variation>
    <location>
        <position position="269"/>
    </location>
</feature>
<feature type="sequence conflict" description="In Ref. 2; BAH12628." evidence="14" ref="2">
    <original>W</original>
    <variation>R</variation>
    <location>
        <position position="330"/>
    </location>
</feature>
<feature type="sequence conflict" description="In Ref. 2; BAD18766." evidence="14" ref="2">
    <original>K</original>
    <variation>R</variation>
    <location>
        <position position="376"/>
    </location>
</feature>
<feature type="sequence conflict" description="In Ref. 2; BAH12628." evidence="14" ref="2">
    <original>I</original>
    <variation>V</variation>
    <location>
        <position position="475"/>
    </location>
</feature>
<feature type="sequence conflict" description="In Ref. 2; BAH12628." evidence="14" ref="2">
    <original>G</original>
    <variation>E</variation>
    <location>
        <position position="548"/>
    </location>
</feature>
<feature type="helix" evidence="16">
    <location>
        <begin position="16"/>
        <end position="19"/>
    </location>
</feature>
<feature type="helix" evidence="16">
    <location>
        <begin position="20"/>
        <end position="23"/>
    </location>
</feature>
<feature type="helix" evidence="16">
    <location>
        <begin position="25"/>
        <end position="28"/>
    </location>
</feature>
<feature type="helix" evidence="16">
    <location>
        <begin position="34"/>
        <end position="50"/>
    </location>
</feature>
<feature type="helix" evidence="16">
    <location>
        <begin position="56"/>
        <end position="59"/>
    </location>
</feature>
<feature type="helix" evidence="16">
    <location>
        <begin position="62"/>
        <end position="66"/>
    </location>
</feature>
<feature type="turn" evidence="16">
    <location>
        <begin position="67"/>
        <end position="71"/>
    </location>
</feature>
<feature type="helix" evidence="16">
    <location>
        <begin position="75"/>
        <end position="79"/>
    </location>
</feature>
<feature type="helix" evidence="16">
    <location>
        <begin position="80"/>
        <end position="82"/>
    </location>
</feature>
<feature type="helix" evidence="16">
    <location>
        <begin position="85"/>
        <end position="102"/>
    </location>
</feature>
<feature type="helix" evidence="16">
    <location>
        <begin position="106"/>
        <end position="117"/>
    </location>
</feature>
<feature type="helix" evidence="16">
    <location>
        <begin position="121"/>
        <end position="136"/>
    </location>
</feature>
<feature type="helix" evidence="16">
    <location>
        <begin position="142"/>
        <end position="157"/>
    </location>
</feature>
<feature type="helix" evidence="16">
    <location>
        <begin position="202"/>
        <end position="219"/>
    </location>
</feature>
<feature type="helix" evidence="16">
    <location>
        <begin position="220"/>
        <end position="222"/>
    </location>
</feature>
<feature type="strand" evidence="16">
    <location>
        <begin position="223"/>
        <end position="227"/>
    </location>
</feature>
<feature type="helix" evidence="16">
    <location>
        <begin position="228"/>
        <end position="240"/>
    </location>
</feature>
<feature type="strand" evidence="16">
    <location>
        <begin position="246"/>
        <end position="248"/>
    </location>
</feature>
<feature type="helix" evidence="16">
    <location>
        <begin position="250"/>
        <end position="275"/>
    </location>
</feature>
<feature type="helix" evidence="16">
    <location>
        <begin position="293"/>
        <end position="296"/>
    </location>
</feature>
<feature type="helix" evidence="16">
    <location>
        <begin position="299"/>
        <end position="309"/>
    </location>
</feature>
<feature type="helix" evidence="16">
    <location>
        <begin position="314"/>
        <end position="332"/>
    </location>
</feature>
<feature type="helix" evidence="16">
    <location>
        <begin position="356"/>
        <end position="366"/>
    </location>
</feature>
<feature type="turn" evidence="16">
    <location>
        <begin position="367"/>
        <end position="369"/>
    </location>
</feature>
<feature type="helix" evidence="16">
    <location>
        <begin position="399"/>
        <end position="404"/>
    </location>
</feature>
<feature type="helix" evidence="16">
    <location>
        <begin position="408"/>
        <end position="427"/>
    </location>
</feature>
<feature type="helix" evidence="16">
    <location>
        <begin position="429"/>
        <end position="436"/>
    </location>
</feature>
<feature type="helix" evidence="16">
    <location>
        <begin position="439"/>
        <end position="442"/>
    </location>
</feature>
<feature type="helix" evidence="16">
    <location>
        <begin position="445"/>
        <end position="459"/>
    </location>
</feature>
<feature type="turn" evidence="16">
    <location>
        <begin position="460"/>
        <end position="462"/>
    </location>
</feature>
<feature type="helix" evidence="16">
    <location>
        <begin position="465"/>
        <end position="482"/>
    </location>
</feature>
<feature type="helix" evidence="16">
    <location>
        <begin position="488"/>
        <end position="498"/>
    </location>
</feature>
<feature type="helix" evidence="15">
    <location>
        <begin position="505"/>
        <end position="507"/>
    </location>
</feature>
<feature type="helix" evidence="16">
    <location>
        <begin position="509"/>
        <end position="515"/>
    </location>
</feature>
<feature type="helix" evidence="16">
    <location>
        <begin position="522"/>
        <end position="546"/>
    </location>
</feature>
<feature type="helix" evidence="16">
    <location>
        <begin position="548"/>
        <end position="552"/>
    </location>
</feature>
<feature type="turn" evidence="16">
    <location>
        <begin position="553"/>
        <end position="555"/>
    </location>
</feature>
<accession>Q86YT5</accession>
<accession>B3KXR0</accession>
<accession>B7Z4P2</accession>
<accession>B7ZLB4</accession>
<accession>F8W7N2</accession>
<accession>Q6ZMG1</accession>
<dbReference type="EMBL" id="AY151833">
    <property type="protein sequence ID" value="AAN86530.1"/>
    <property type="molecule type" value="mRNA"/>
</dbReference>
<dbReference type="EMBL" id="AK172785">
    <property type="protein sequence ID" value="BAD18766.1"/>
    <property type="molecule type" value="mRNA"/>
</dbReference>
<dbReference type="EMBL" id="AK127797">
    <property type="protein sequence ID" value="BAG54572.1"/>
    <property type="molecule type" value="mRNA"/>
</dbReference>
<dbReference type="EMBL" id="AK297612">
    <property type="protein sequence ID" value="BAH12628.1"/>
    <property type="molecule type" value="mRNA"/>
</dbReference>
<dbReference type="EMBL" id="AC004706">
    <property type="status" value="NOT_ANNOTATED_CDS"/>
    <property type="molecule type" value="Genomic_DNA"/>
</dbReference>
<dbReference type="EMBL" id="CH471108">
    <property type="protein sequence ID" value="EAW90292.1"/>
    <property type="molecule type" value="Genomic_DNA"/>
</dbReference>
<dbReference type="EMBL" id="BC104795">
    <property type="protein sequence ID" value="AAI04796.1"/>
    <property type="molecule type" value="mRNA"/>
</dbReference>
<dbReference type="EMBL" id="BC112151">
    <property type="protein sequence ID" value="AAI12152.1"/>
    <property type="molecule type" value="mRNA"/>
</dbReference>
<dbReference type="EMBL" id="BC143689">
    <property type="protein sequence ID" value="AAI43690.1"/>
    <property type="molecule type" value="mRNA"/>
</dbReference>
<dbReference type="CCDS" id="CCDS11079.1">
    <molecule id="Q86YT5-1"/>
</dbReference>
<dbReference type="CCDS" id="CCDS45593.1">
    <molecule id="Q86YT5-2"/>
</dbReference>
<dbReference type="CCDS" id="CCDS67136.1">
    <molecule id="Q86YT5-4"/>
</dbReference>
<dbReference type="CCDS" id="CCDS67137.1">
    <molecule id="Q86YT5-3"/>
</dbReference>
<dbReference type="RefSeq" id="NP_001137310.1">
    <molecule id="Q86YT5-2"/>
    <property type="nucleotide sequence ID" value="NM_001143838.3"/>
</dbReference>
<dbReference type="RefSeq" id="NP_001271438.1">
    <molecule id="Q86YT5-3"/>
    <property type="nucleotide sequence ID" value="NM_001284509.2"/>
</dbReference>
<dbReference type="RefSeq" id="NP_001271439.1">
    <molecule id="Q86YT5-4"/>
    <property type="nucleotide sequence ID" value="NM_001284510.2"/>
</dbReference>
<dbReference type="RefSeq" id="NP_808218.1">
    <molecule id="Q86YT5-1"/>
    <property type="nucleotide sequence ID" value="NM_177550.5"/>
</dbReference>
<dbReference type="PDB" id="7JSJ">
    <property type="method" value="EM"/>
    <property type="resolution" value="3.12 A"/>
    <property type="chains" value="A/B=1-568"/>
</dbReference>
<dbReference type="PDB" id="7JSK">
    <property type="method" value="EM"/>
    <property type="resolution" value="3.04 A"/>
    <property type="chains" value="A/B=1-568"/>
</dbReference>
<dbReference type="PDB" id="8UVB">
    <property type="method" value="EM"/>
    <property type="resolution" value="2.13 A"/>
    <property type="chains" value="A/B=1-568"/>
</dbReference>
<dbReference type="PDB" id="8UVH">
    <property type="method" value="EM"/>
    <property type="resolution" value="2.33 A"/>
    <property type="chains" value="A/B=1-568"/>
</dbReference>
<dbReference type="PDBsum" id="7JSJ"/>
<dbReference type="PDBsum" id="7JSK"/>
<dbReference type="PDBsum" id="8UVB"/>
<dbReference type="PDBsum" id="8UVH"/>
<dbReference type="EMDB" id="EMD-22456"/>
<dbReference type="EMDB" id="EMD-22457"/>
<dbReference type="EMDB" id="EMD-42614"/>
<dbReference type="EMDB" id="EMD-42620"/>
<dbReference type="SMR" id="Q86YT5"/>
<dbReference type="BioGRID" id="129763">
    <property type="interactions" value="22"/>
</dbReference>
<dbReference type="FunCoup" id="Q86YT5">
    <property type="interactions" value="960"/>
</dbReference>
<dbReference type="IntAct" id="Q86YT5">
    <property type="interactions" value="19"/>
</dbReference>
<dbReference type="STRING" id="9606.ENSP00000406220"/>
<dbReference type="BindingDB" id="Q86YT5"/>
<dbReference type="ChEMBL" id="CHEMBL3769293"/>
<dbReference type="DrugBank" id="DB09154">
    <property type="generic name" value="Sodium citrate"/>
</dbReference>
<dbReference type="GuidetoPHARMACOLOGY" id="981"/>
<dbReference type="TCDB" id="2.A.47.1.9">
    <property type="family name" value="the divalent anion:na(+) symporter (dass) family"/>
</dbReference>
<dbReference type="GlyCosmos" id="Q86YT5">
    <property type="glycosylation" value="1 site, No reported glycans"/>
</dbReference>
<dbReference type="GlyGen" id="Q86YT5">
    <property type="glycosylation" value="1 site"/>
</dbReference>
<dbReference type="iPTMnet" id="Q86YT5"/>
<dbReference type="PhosphoSitePlus" id="Q86YT5"/>
<dbReference type="BioMuta" id="SLC13A5"/>
<dbReference type="DMDM" id="74714197"/>
<dbReference type="MassIVE" id="Q86YT5"/>
<dbReference type="PaxDb" id="9606-ENSP00000406220"/>
<dbReference type="PeptideAtlas" id="Q86YT5"/>
<dbReference type="ProteomicsDB" id="29975"/>
<dbReference type="ProteomicsDB" id="70466">
    <molecule id="Q86YT5-1"/>
</dbReference>
<dbReference type="ProteomicsDB" id="70467">
    <molecule id="Q86YT5-2"/>
</dbReference>
<dbReference type="Antibodypedia" id="23824">
    <property type="antibodies" value="114 antibodies from 22 providers"/>
</dbReference>
<dbReference type="DNASU" id="284111"/>
<dbReference type="Ensembl" id="ENST00000293800.10">
    <molecule id="Q86YT5-3"/>
    <property type="protein sequence ID" value="ENSP00000293800.6"/>
    <property type="gene ID" value="ENSG00000141485.17"/>
</dbReference>
<dbReference type="Ensembl" id="ENST00000381074.8">
    <molecule id="Q86YT5-4"/>
    <property type="protein sequence ID" value="ENSP00000370464.4"/>
    <property type="gene ID" value="ENSG00000141485.17"/>
</dbReference>
<dbReference type="Ensembl" id="ENST00000433363.7">
    <molecule id="Q86YT5-1"/>
    <property type="protein sequence ID" value="ENSP00000406220.2"/>
    <property type="gene ID" value="ENSG00000141485.17"/>
</dbReference>
<dbReference type="Ensembl" id="ENST00000573648.5">
    <molecule id="Q86YT5-2"/>
    <property type="protein sequence ID" value="ENSP00000459372.1"/>
    <property type="gene ID" value="ENSG00000141485.17"/>
</dbReference>
<dbReference type="GeneID" id="284111"/>
<dbReference type="KEGG" id="hsa:284111"/>
<dbReference type="MANE-Select" id="ENST00000433363.7">
    <property type="protein sequence ID" value="ENSP00000406220.2"/>
    <property type="RefSeq nucleotide sequence ID" value="NM_177550.5"/>
    <property type="RefSeq protein sequence ID" value="NP_808218.1"/>
</dbReference>
<dbReference type="UCSC" id="uc002gdj.5">
    <molecule id="Q86YT5-1"/>
    <property type="organism name" value="human"/>
</dbReference>
<dbReference type="AGR" id="HGNC:23089"/>
<dbReference type="CTD" id="284111"/>
<dbReference type="DisGeNET" id="284111"/>
<dbReference type="GeneCards" id="SLC13A5"/>
<dbReference type="HGNC" id="HGNC:23089">
    <property type="gene designation" value="SLC13A5"/>
</dbReference>
<dbReference type="HPA" id="ENSG00000141485">
    <property type="expression patterns" value="Tissue enriched (liver)"/>
</dbReference>
<dbReference type="MalaCards" id="SLC13A5"/>
<dbReference type="MIM" id="608305">
    <property type="type" value="gene"/>
</dbReference>
<dbReference type="MIM" id="615905">
    <property type="type" value="phenotype"/>
</dbReference>
<dbReference type="neXtProt" id="NX_Q86YT5"/>
<dbReference type="OpenTargets" id="ENSG00000141485"/>
<dbReference type="Orphanet" id="1946">
    <property type="disease" value="Amelocerebrohypohidrotic syndrome"/>
</dbReference>
<dbReference type="Orphanet" id="442835">
    <property type="disease" value="Non-specific early-onset epileptic encephalopathy"/>
</dbReference>
<dbReference type="PharmGKB" id="PA134950956"/>
<dbReference type="VEuPathDB" id="HostDB:ENSG00000141485"/>
<dbReference type="eggNOG" id="KOG1281">
    <property type="taxonomic scope" value="Eukaryota"/>
</dbReference>
<dbReference type="GeneTree" id="ENSGT01030000234550"/>
<dbReference type="HOGENOM" id="CLU_005170_9_1_1"/>
<dbReference type="InParanoid" id="Q86YT5"/>
<dbReference type="OMA" id="LMGIWWM"/>
<dbReference type="OrthoDB" id="6493944at2759"/>
<dbReference type="PAN-GO" id="Q86YT5">
    <property type="GO annotations" value="6 GO annotations based on evolutionary models"/>
</dbReference>
<dbReference type="PhylomeDB" id="Q86YT5"/>
<dbReference type="TreeFam" id="TF312913"/>
<dbReference type="PathwayCommons" id="Q86YT5"/>
<dbReference type="Reactome" id="R-HSA-433137">
    <property type="pathway name" value="Sodium-coupled sulphate, di- and tri-carboxylate transporters"/>
</dbReference>
<dbReference type="SABIO-RK" id="Q86YT5"/>
<dbReference type="SignaLink" id="Q86YT5"/>
<dbReference type="BioGRID-ORCS" id="284111">
    <property type="hits" value="12 hits in 1147 CRISPR screens"/>
</dbReference>
<dbReference type="ChiTaRS" id="SLC13A5">
    <property type="organism name" value="human"/>
</dbReference>
<dbReference type="GenomeRNAi" id="284111"/>
<dbReference type="Pharos" id="Q86YT5">
    <property type="development level" value="Tchem"/>
</dbReference>
<dbReference type="PRO" id="PR:Q86YT5"/>
<dbReference type="Proteomes" id="UP000005640">
    <property type="component" value="Chromosome 17"/>
</dbReference>
<dbReference type="RNAct" id="Q86YT5">
    <property type="molecule type" value="protein"/>
</dbReference>
<dbReference type="Bgee" id="ENSG00000141485">
    <property type="expression patterns" value="Expressed in right lobe of liver and 104 other cell types or tissues"/>
</dbReference>
<dbReference type="ExpressionAtlas" id="Q86YT5">
    <property type="expression patterns" value="baseline and differential"/>
</dbReference>
<dbReference type="GO" id="GO:0005829">
    <property type="term" value="C:cytosol"/>
    <property type="evidence" value="ECO:0000314"/>
    <property type="project" value="HPA"/>
</dbReference>
<dbReference type="GO" id="GO:0005654">
    <property type="term" value="C:nucleoplasm"/>
    <property type="evidence" value="ECO:0000314"/>
    <property type="project" value="HPA"/>
</dbReference>
<dbReference type="GO" id="GO:0005886">
    <property type="term" value="C:plasma membrane"/>
    <property type="evidence" value="ECO:0000314"/>
    <property type="project" value="HPA"/>
</dbReference>
<dbReference type="GO" id="GO:0015137">
    <property type="term" value="F:citrate transmembrane transporter activity"/>
    <property type="evidence" value="ECO:0000314"/>
    <property type="project" value="ARUK-UCL"/>
</dbReference>
<dbReference type="GO" id="GO:0042802">
    <property type="term" value="F:identical protein binding"/>
    <property type="evidence" value="ECO:0000353"/>
    <property type="project" value="IntAct"/>
</dbReference>
<dbReference type="GO" id="GO:0005343">
    <property type="term" value="F:organic acid:sodium symporter activity"/>
    <property type="evidence" value="ECO:0000314"/>
    <property type="project" value="UniProtKB"/>
</dbReference>
<dbReference type="GO" id="GO:0017153">
    <property type="term" value="F:sodium:dicarboxylate symporter activity"/>
    <property type="evidence" value="ECO:0000318"/>
    <property type="project" value="GO_Central"/>
</dbReference>
<dbReference type="GO" id="GO:0015141">
    <property type="term" value="F:succinate transmembrane transporter activity"/>
    <property type="evidence" value="ECO:0000318"/>
    <property type="project" value="GO_Central"/>
</dbReference>
<dbReference type="GO" id="GO:0015742">
    <property type="term" value="P:alpha-ketoglutarate transport"/>
    <property type="evidence" value="ECO:0000314"/>
    <property type="project" value="UniProtKB"/>
</dbReference>
<dbReference type="GO" id="GO:0071285">
    <property type="term" value="P:cellular response to lithium ion"/>
    <property type="evidence" value="ECO:0000314"/>
    <property type="project" value="UniProtKB"/>
</dbReference>
<dbReference type="GO" id="GO:0015746">
    <property type="term" value="P:citrate transport"/>
    <property type="evidence" value="ECO:0000314"/>
    <property type="project" value="UniProtKB"/>
</dbReference>
<dbReference type="GO" id="GO:0015741">
    <property type="term" value="P:fumarate transport"/>
    <property type="evidence" value="ECO:0000314"/>
    <property type="project" value="UniProtKB"/>
</dbReference>
<dbReference type="GO" id="GO:0015729">
    <property type="term" value="P:oxaloacetate transport"/>
    <property type="evidence" value="ECO:0000314"/>
    <property type="project" value="UniProtKB"/>
</dbReference>
<dbReference type="GO" id="GO:0015744">
    <property type="term" value="P:succinate transport"/>
    <property type="evidence" value="ECO:0000314"/>
    <property type="project" value="UniProtKB"/>
</dbReference>
<dbReference type="GO" id="GO:0055085">
    <property type="term" value="P:transmembrane transport"/>
    <property type="evidence" value="ECO:0000318"/>
    <property type="project" value="GO_Central"/>
</dbReference>
<dbReference type="CDD" id="cd01115">
    <property type="entry name" value="SLC13_permease"/>
    <property type="match status" value="1"/>
</dbReference>
<dbReference type="InterPro" id="IPR031312">
    <property type="entry name" value="Na/sul_symport_CS"/>
</dbReference>
<dbReference type="InterPro" id="IPR001898">
    <property type="entry name" value="SLC13A/DASS"/>
</dbReference>
<dbReference type="PANTHER" id="PTHR10283:SF109">
    <property type="entry name" value="NA(+)_CITRATE COTRANSPORTER"/>
    <property type="match status" value="1"/>
</dbReference>
<dbReference type="PANTHER" id="PTHR10283">
    <property type="entry name" value="SOLUTE CARRIER FAMILY 13 MEMBER"/>
    <property type="match status" value="1"/>
</dbReference>
<dbReference type="Pfam" id="PF00939">
    <property type="entry name" value="Na_sulph_symp"/>
    <property type="match status" value="1"/>
</dbReference>
<dbReference type="PROSITE" id="PS01271">
    <property type="entry name" value="NA_SULFATE"/>
    <property type="match status" value="1"/>
</dbReference>
<gene>
    <name type="primary">SLC13A5</name>
    <name type="synonym">NACT</name>
</gene>
<sequence>MASALSYVSKFKSFVILFVTPLLLLPLVILMPAKFVRCAYVIILMAIYWCTEVIPLAVTSLMPVLLFPLFQILDSRQVCVQYMKDTNMLFLGGLIVAVAVERWNLHKRIALRTLLWVGAKPARLMLGFMGVTALLSMWISNTATTAMMVPIVEAILQQMEATSAATEAGLELVDKGKAKELPGSQVIFEGPTLGQQEDQERKRLCKAMTLCICYAASIGGTATLTGTGPNVVLLGQMNELFPDSKDLVNFASWFAFAFPNMLVMLLFAWLWLQFVYMRFNFKKSWGCGLESKKNEKAALKVLQEEYRKLGPLSFAEINVLICFFLLVILWFSRDPGFMPGWLTVAWVEGETKYVSDATVAIFVATLLFIVPSQKPKFNFRSQTEEERKTPFYPPPLLDWKVTQEKVPWGIVLLLGGGFALAKGSEASGLSVWMGKQMEPLHAVPPAAITLILSLLVAVFTECTSNVATTTLFLPIFASMSRSIGLNPLYIMLPCTLSASFAFMLPVATPPNAIVFTYGHLKVADMVKTGVIMNIIGVFCVFLAVNTWGRAIFDLDHFPDWANVTHIET</sequence>
<proteinExistence type="evidence at protein level"/>
<protein>
    <recommendedName>
        <fullName>Na(+)/citrate cotransporter</fullName>
        <shortName evidence="11">NaCT</shortName>
    </recommendedName>
    <alternativeName>
        <fullName evidence="11">Sodium-coupled citrate transporter</fullName>
    </alternativeName>
    <alternativeName>
        <fullName>Sodium-dependent citrate transporter</fullName>
    </alternativeName>
    <alternativeName>
        <fullName>Solute carrier family 13 member 5</fullName>
    </alternativeName>
</protein>
<organism>
    <name type="scientific">Homo sapiens</name>
    <name type="common">Human</name>
    <dbReference type="NCBI Taxonomy" id="9606"/>
    <lineage>
        <taxon>Eukaryota</taxon>
        <taxon>Metazoa</taxon>
        <taxon>Chordata</taxon>
        <taxon>Craniata</taxon>
        <taxon>Vertebrata</taxon>
        <taxon>Euteleostomi</taxon>
        <taxon>Mammalia</taxon>
        <taxon>Eutheria</taxon>
        <taxon>Euarchontoglires</taxon>
        <taxon>Primates</taxon>
        <taxon>Haplorrhini</taxon>
        <taxon>Catarrhini</taxon>
        <taxon>Hominidae</taxon>
        <taxon>Homo</taxon>
    </lineage>
</organism>
<reference key="1">
    <citation type="journal article" date="2002" name="Biochem. Biophys. Res. Commun.">
        <title>Human Na+ -coupled citrate transporter: primary structure, genomic organization, and transport function.</title>
        <authorList>
            <person name="Inoue K."/>
            <person name="Zhuang L."/>
            <person name="Ganapathy V."/>
        </authorList>
    </citation>
    <scope>NUCLEOTIDE SEQUENCE [MRNA] (ISOFORM 1)</scope>
    <scope>FUNCTION</scope>
    <scope>TISSUE SPECIFICITY</scope>
    <scope>TRANSPORT ACTIVITY</scope>
</reference>
<reference key="2">
    <citation type="journal article" date="2004" name="Nat. Genet.">
        <title>Complete sequencing and characterization of 21,243 full-length human cDNAs.</title>
        <authorList>
            <person name="Ota T."/>
            <person name="Suzuki Y."/>
            <person name="Nishikawa T."/>
            <person name="Otsuki T."/>
            <person name="Sugiyama T."/>
            <person name="Irie R."/>
            <person name="Wakamatsu A."/>
            <person name="Hayashi K."/>
            <person name="Sato H."/>
            <person name="Nagai K."/>
            <person name="Kimura K."/>
            <person name="Makita H."/>
            <person name="Sekine M."/>
            <person name="Obayashi M."/>
            <person name="Nishi T."/>
            <person name="Shibahara T."/>
            <person name="Tanaka T."/>
            <person name="Ishii S."/>
            <person name="Yamamoto J."/>
            <person name="Saito K."/>
            <person name="Kawai Y."/>
            <person name="Isono Y."/>
            <person name="Nakamura Y."/>
            <person name="Nagahari K."/>
            <person name="Murakami K."/>
            <person name="Yasuda T."/>
            <person name="Iwayanagi T."/>
            <person name="Wagatsuma M."/>
            <person name="Shiratori A."/>
            <person name="Sudo H."/>
            <person name="Hosoiri T."/>
            <person name="Kaku Y."/>
            <person name="Kodaira H."/>
            <person name="Kondo H."/>
            <person name="Sugawara M."/>
            <person name="Takahashi M."/>
            <person name="Kanda K."/>
            <person name="Yokoi T."/>
            <person name="Furuya T."/>
            <person name="Kikkawa E."/>
            <person name="Omura Y."/>
            <person name="Abe K."/>
            <person name="Kamihara K."/>
            <person name="Katsuta N."/>
            <person name="Sato K."/>
            <person name="Tanikawa M."/>
            <person name="Yamazaki M."/>
            <person name="Ninomiya K."/>
            <person name="Ishibashi T."/>
            <person name="Yamashita H."/>
            <person name="Murakawa K."/>
            <person name="Fujimori K."/>
            <person name="Tanai H."/>
            <person name="Kimata M."/>
            <person name="Watanabe M."/>
            <person name="Hiraoka S."/>
            <person name="Chiba Y."/>
            <person name="Ishida S."/>
            <person name="Ono Y."/>
            <person name="Takiguchi S."/>
            <person name="Watanabe S."/>
            <person name="Yosida M."/>
            <person name="Hotuta T."/>
            <person name="Kusano J."/>
            <person name="Kanehori K."/>
            <person name="Takahashi-Fujii A."/>
            <person name="Hara H."/>
            <person name="Tanase T.-O."/>
            <person name="Nomura Y."/>
            <person name="Togiya S."/>
            <person name="Komai F."/>
            <person name="Hara R."/>
            <person name="Takeuchi K."/>
            <person name="Arita M."/>
            <person name="Imose N."/>
            <person name="Musashino K."/>
            <person name="Yuuki H."/>
            <person name="Oshima A."/>
            <person name="Sasaki N."/>
            <person name="Aotsuka S."/>
            <person name="Yoshikawa Y."/>
            <person name="Matsunawa H."/>
            <person name="Ichihara T."/>
            <person name="Shiohata N."/>
            <person name="Sano S."/>
            <person name="Moriya S."/>
            <person name="Momiyama H."/>
            <person name="Satoh N."/>
            <person name="Takami S."/>
            <person name="Terashima Y."/>
            <person name="Suzuki O."/>
            <person name="Nakagawa S."/>
            <person name="Senoh A."/>
            <person name="Mizoguchi H."/>
            <person name="Goto Y."/>
            <person name="Shimizu F."/>
            <person name="Wakebe H."/>
            <person name="Hishigaki H."/>
            <person name="Watanabe T."/>
            <person name="Sugiyama A."/>
            <person name="Takemoto M."/>
            <person name="Kawakami B."/>
            <person name="Yamazaki M."/>
            <person name="Watanabe K."/>
            <person name="Kumagai A."/>
            <person name="Itakura S."/>
            <person name="Fukuzumi Y."/>
            <person name="Fujimori Y."/>
            <person name="Komiyama M."/>
            <person name="Tashiro H."/>
            <person name="Tanigami A."/>
            <person name="Fujiwara T."/>
            <person name="Ono T."/>
            <person name="Yamada K."/>
            <person name="Fujii Y."/>
            <person name="Ozaki K."/>
            <person name="Hirao M."/>
            <person name="Ohmori Y."/>
            <person name="Kawabata A."/>
            <person name="Hikiji T."/>
            <person name="Kobatake N."/>
            <person name="Inagaki H."/>
            <person name="Ikema Y."/>
            <person name="Okamoto S."/>
            <person name="Okitani R."/>
            <person name="Kawakami T."/>
            <person name="Noguchi S."/>
            <person name="Itoh T."/>
            <person name="Shigeta K."/>
            <person name="Senba T."/>
            <person name="Matsumura K."/>
            <person name="Nakajima Y."/>
            <person name="Mizuno T."/>
            <person name="Morinaga M."/>
            <person name="Sasaki M."/>
            <person name="Togashi T."/>
            <person name="Oyama M."/>
            <person name="Hata H."/>
            <person name="Watanabe M."/>
            <person name="Komatsu T."/>
            <person name="Mizushima-Sugano J."/>
            <person name="Satoh T."/>
            <person name="Shirai Y."/>
            <person name="Takahashi Y."/>
            <person name="Nakagawa K."/>
            <person name="Okumura K."/>
            <person name="Nagase T."/>
            <person name="Nomura N."/>
            <person name="Kikuchi H."/>
            <person name="Masuho Y."/>
            <person name="Yamashita R."/>
            <person name="Nakai K."/>
            <person name="Yada T."/>
            <person name="Nakamura Y."/>
            <person name="Ohara O."/>
            <person name="Isogai T."/>
            <person name="Sugano S."/>
        </authorList>
    </citation>
    <scope>NUCLEOTIDE SEQUENCE [LARGE SCALE MRNA] (ISOFORMS 1; 3 AND 4)</scope>
    <source>
        <tissue>Brain</tissue>
    </source>
</reference>
<reference key="3">
    <citation type="journal article" date="2006" name="Nature">
        <title>DNA sequence of human chromosome 17 and analysis of rearrangement in the human lineage.</title>
        <authorList>
            <person name="Zody M.C."/>
            <person name="Garber M."/>
            <person name="Adams D.J."/>
            <person name="Sharpe T."/>
            <person name="Harrow J."/>
            <person name="Lupski J.R."/>
            <person name="Nicholson C."/>
            <person name="Searle S.M."/>
            <person name="Wilming L."/>
            <person name="Young S.K."/>
            <person name="Abouelleil A."/>
            <person name="Allen N.R."/>
            <person name="Bi W."/>
            <person name="Bloom T."/>
            <person name="Borowsky M.L."/>
            <person name="Bugalter B.E."/>
            <person name="Butler J."/>
            <person name="Chang J.L."/>
            <person name="Chen C.-K."/>
            <person name="Cook A."/>
            <person name="Corum B."/>
            <person name="Cuomo C.A."/>
            <person name="de Jong P.J."/>
            <person name="DeCaprio D."/>
            <person name="Dewar K."/>
            <person name="FitzGerald M."/>
            <person name="Gilbert J."/>
            <person name="Gibson R."/>
            <person name="Gnerre S."/>
            <person name="Goldstein S."/>
            <person name="Grafham D.V."/>
            <person name="Grocock R."/>
            <person name="Hafez N."/>
            <person name="Hagopian D.S."/>
            <person name="Hart E."/>
            <person name="Norman C.H."/>
            <person name="Humphray S."/>
            <person name="Jaffe D.B."/>
            <person name="Jones M."/>
            <person name="Kamal M."/>
            <person name="Khodiyar V.K."/>
            <person name="LaButti K."/>
            <person name="Laird G."/>
            <person name="Lehoczky J."/>
            <person name="Liu X."/>
            <person name="Lokyitsang T."/>
            <person name="Loveland J."/>
            <person name="Lui A."/>
            <person name="Macdonald P."/>
            <person name="Major J.E."/>
            <person name="Matthews L."/>
            <person name="Mauceli E."/>
            <person name="McCarroll S.A."/>
            <person name="Mihalev A.H."/>
            <person name="Mudge J."/>
            <person name="Nguyen C."/>
            <person name="Nicol R."/>
            <person name="O'Leary S.B."/>
            <person name="Osoegawa K."/>
            <person name="Schwartz D.C."/>
            <person name="Shaw-Smith C."/>
            <person name="Stankiewicz P."/>
            <person name="Steward C."/>
            <person name="Swarbreck D."/>
            <person name="Venkataraman V."/>
            <person name="Whittaker C.A."/>
            <person name="Yang X."/>
            <person name="Zimmer A.R."/>
            <person name="Bradley A."/>
            <person name="Hubbard T."/>
            <person name="Birren B.W."/>
            <person name="Rogers J."/>
            <person name="Lander E.S."/>
            <person name="Nusbaum C."/>
        </authorList>
    </citation>
    <scope>NUCLEOTIDE SEQUENCE [LARGE SCALE GENOMIC DNA]</scope>
</reference>
<reference key="4">
    <citation type="submission" date="2005-09" db="EMBL/GenBank/DDBJ databases">
        <authorList>
            <person name="Mural R.J."/>
            <person name="Istrail S."/>
            <person name="Sutton G."/>
            <person name="Florea L."/>
            <person name="Halpern A.L."/>
            <person name="Mobarry C.M."/>
            <person name="Lippert R."/>
            <person name="Walenz B."/>
            <person name="Shatkay H."/>
            <person name="Dew I."/>
            <person name="Miller J.R."/>
            <person name="Flanigan M.J."/>
            <person name="Edwards N.J."/>
            <person name="Bolanos R."/>
            <person name="Fasulo D."/>
            <person name="Halldorsson B.V."/>
            <person name="Hannenhalli S."/>
            <person name="Turner R."/>
            <person name="Yooseph S."/>
            <person name="Lu F."/>
            <person name="Nusskern D.R."/>
            <person name="Shue B.C."/>
            <person name="Zheng X.H."/>
            <person name="Zhong F."/>
            <person name="Delcher A.L."/>
            <person name="Huson D.H."/>
            <person name="Kravitz S.A."/>
            <person name="Mouchard L."/>
            <person name="Reinert K."/>
            <person name="Remington K.A."/>
            <person name="Clark A.G."/>
            <person name="Waterman M.S."/>
            <person name="Eichler E.E."/>
            <person name="Adams M.D."/>
            <person name="Hunkapiller M.W."/>
            <person name="Myers E.W."/>
            <person name="Venter J.C."/>
        </authorList>
    </citation>
    <scope>NUCLEOTIDE SEQUENCE [LARGE SCALE GENOMIC DNA]</scope>
</reference>
<reference key="5">
    <citation type="journal article" date="2004" name="Genome Res.">
        <title>The status, quality, and expansion of the NIH full-length cDNA project: the Mammalian Gene Collection (MGC).</title>
        <authorList>
            <consortium name="The MGC Project Team"/>
        </authorList>
    </citation>
    <scope>NUCLEOTIDE SEQUENCE [LARGE SCALE MRNA] (ISOFORMS 1 AND 2)</scope>
    <source>
        <tissue>Brain</tissue>
    </source>
</reference>
<reference key="6">
    <citation type="journal article" date="2003" name="Biochem. J.">
        <title>Human sodium-coupled citrate transporter, the orthologue of Drosophila Indy, as a novel target for lithium action.</title>
        <authorList>
            <person name="Inoue K."/>
            <person name="Zhuang L."/>
            <person name="Maddox D.M."/>
            <person name="Smith S.B."/>
            <person name="Ganapathy V."/>
        </authorList>
    </citation>
    <scope>FUNCTION</scope>
    <scope>TRANSPORT ACTIVITY</scope>
    <scope>ACTIVITY REGULATION</scope>
</reference>
<reference key="7">
    <citation type="journal article" date="2009" name="J. Proteome Res.">
        <title>Glycoproteomics analysis of human liver tissue by combination of multiple enzyme digestion and hydrazide chemistry.</title>
        <authorList>
            <person name="Chen R."/>
            <person name="Jiang X."/>
            <person name="Sun D."/>
            <person name="Han G."/>
            <person name="Wang F."/>
            <person name="Ye M."/>
            <person name="Wang L."/>
            <person name="Zou H."/>
        </authorList>
    </citation>
    <scope>GLYCOSYLATION [LARGE SCALE ANALYSIS] AT ASN-562</scope>
    <source>
        <tissue>Liver</tissue>
    </source>
</reference>
<reference key="8">
    <citation type="journal article" date="2015" name="J. Pharmacol. Exp. Ther.">
        <title>Electrophysiological characterization of human and mouse sodium-dependent citrate transporters (NaCT/SLC13A5) reveal species differences with respect to substrate sensitivity and cation dependence.</title>
        <authorList>
            <person name="Zwart R."/>
            <person name="Peeva P.M."/>
            <person name="Rong J.X."/>
            <person name="Sher E."/>
        </authorList>
    </citation>
    <scope>FUNCTION</scope>
    <scope>TRANSPORT ACTIVITY</scope>
</reference>
<reference key="9">
    <citation type="journal article" date="2014" name="Am. J. Hum. Genet.">
        <title>Mutations in SLC13A5 cause autosomal-recessive epileptic encephalopathy with seizure onset in the first days of life.</title>
        <authorList>
            <person name="Thevenon J."/>
            <person name="Milh M."/>
            <person name="Feillet F."/>
            <person name="St-Onge J."/>
            <person name="Duffourd Y."/>
            <person name="Juge C."/>
            <person name="Roubertie A."/>
            <person name="Heron D."/>
            <person name="Mignot C."/>
            <person name="Raffo E."/>
            <person name="Isidor B."/>
            <person name="Wahlen S."/>
            <person name="Sanlaville D."/>
            <person name="Villeneuve N."/>
            <person name="Darmency-Stamboul V."/>
            <person name="Toutain A."/>
            <person name="Lefebvre M."/>
            <person name="Chouchane M."/>
            <person name="Huet F."/>
            <person name="Lafon A."/>
            <person name="de Saint Martin A."/>
            <person name="Lesca G."/>
            <person name="El Chehadeh S."/>
            <person name="Thauvin-Robinet C."/>
            <person name="Masurel-Paulet A."/>
            <person name="Odent S."/>
            <person name="Villard L."/>
            <person name="Philippe C."/>
            <person name="Faivre L."/>
            <person name="Riviere J.B."/>
        </authorList>
    </citation>
    <scope>INVOLVEMENT IN DEE25</scope>
    <scope>VARIANTS DEE25 ARG-219; MET-227 AND PRO-488</scope>
</reference>
<reference key="10">
    <citation type="journal article" date="2015" name="Brain">
        <title>Recessive mutations in SLC13A5 result in a loss of citrate transport and cause neonatal epilepsy, developmental delay and teeth hypoplasia.</title>
        <authorList>
            <consortium name="Autosomal recessive working group of the EuroEPINOMICS RES Consortium"/>
            <person name="Hardies K."/>
            <person name="de Kovel C.G."/>
            <person name="Weckhuysen S."/>
            <person name="Asselbergh B."/>
            <person name="Geuens T."/>
            <person name="Deconinck T."/>
            <person name="Azmi A."/>
            <person name="May P."/>
            <person name="Brilstra E."/>
            <person name="Becker F."/>
            <person name="Barisic N."/>
            <person name="Craiu D."/>
            <person name="Braun K.P."/>
            <person name="Lal D."/>
            <person name="Thiele H."/>
            <person name="Schubert J."/>
            <person name="Weber Y."/>
            <person name="van 't Slot R."/>
            <person name="Nuernberg P."/>
            <person name="Balling R."/>
            <person name="Timmerman V."/>
            <person name="Lerche H."/>
            <person name="Maudsley S."/>
            <person name="Helbig I."/>
            <person name="Suls A."/>
            <person name="Koeleman B.P."/>
            <person name="De Jonghe P."/>
        </authorList>
    </citation>
    <scope>INVOLVEMENT IN DEE25</scope>
    <scope>FUNCTION</scope>
    <scope>TRANSPORT ACTIVITY</scope>
    <scope>SUBCELLULAR LOCATION</scope>
    <scope>VARIANTS DEE25 MET-142; ARG-219; MET-227; 341-TRP--THR-568 DEL; LEU-427 AND HIS-524</scope>
    <scope>CHARACTERIZATION OF VARIANTS DEE25 MET-142; ARG-219; MET-227; 341-TRP--THR-568 DEL; LEU-427 AND HIS-524</scope>
</reference>
<reference key="11">
    <citation type="journal article" date="2018" name="Sci. Rep.">
        <title>Analysis of naturally occurring mutations in the human uptake transporter NaCT important for bone and brain development and energy metabolism.</title>
        <authorList>
            <person name="Selch S."/>
            <person name="Chafai A."/>
            <person name="Sticht H."/>
            <person name="Birkenfeld A.L."/>
            <person name="Fromm M.F."/>
            <person name="Koenig J."/>
        </authorList>
    </citation>
    <scope>CHARACTERIZATION OF VARIANTS DEE25 ARG-219; MET-227 AND PRO-488</scope>
    <scope>CHARACTERIZATION OF VARIANTS GLU-219; ASN-243; PRO-420 AND ARG-485</scope>
    <scope>FUNCTION</scope>
    <scope>TRANSPORT ACTIVITY</scope>
    <scope>SUBCELLULAR LOCATION</scope>
    <scope>BIOPHYSICOCHEMICAL PROPERTIES</scope>
</reference>
<reference key="12">
    <citation type="journal article" date="2021" name="Nature">
        <title>Structure and inhibition mechanism of the human citrate transporter NaCT.</title>
        <authorList>
            <person name="Sauer D.B."/>
            <person name="Song J."/>
            <person name="Wang B."/>
            <person name="Hilton J.K."/>
            <person name="Karpowich N.K."/>
            <person name="Mindell J.A."/>
            <person name="Rice W.J."/>
            <person name="Wang D.N."/>
        </authorList>
    </citation>
    <scope>X-RAY CRYSTALLOGRAPHY (3.04 ANGSTROMS) OF 1-568 IN COMPLEX WITH INHIBITOR</scope>
    <scope>FUNCTION</scope>
    <scope>TRANSPORTER ACTIVITY</scope>
    <scope>SUBUNIT</scope>
    <scope>ACTIVITY REGULATION</scope>
    <scope>MUTAGENESIS OF GLY-409 AND ILE-410</scope>
</reference>